<gene>
    <name evidence="1" type="primary">pgi</name>
    <name type="ordered locus">Mfl254</name>
</gene>
<protein>
    <recommendedName>
        <fullName evidence="1">Glucose-6-phosphate isomerase</fullName>
        <shortName evidence="1">GPI</shortName>
        <ecNumber evidence="1">5.3.1.9</ecNumber>
    </recommendedName>
    <alternativeName>
        <fullName evidence="1">Phosphoglucose isomerase</fullName>
        <shortName evidence="1">PGI</shortName>
    </alternativeName>
    <alternativeName>
        <fullName evidence="1">Phosphohexose isomerase</fullName>
        <shortName evidence="1">PHI</shortName>
    </alternativeName>
</protein>
<proteinExistence type="inferred from homology"/>
<name>G6PI_MESFL</name>
<accession>Q6F1L2</accession>
<comment type="function">
    <text evidence="1">Catalyzes the reversible isomerization of glucose-6-phosphate to fructose-6-phosphate.</text>
</comment>
<comment type="catalytic activity">
    <reaction evidence="1">
        <text>alpha-D-glucose 6-phosphate = beta-D-fructose 6-phosphate</text>
        <dbReference type="Rhea" id="RHEA:11816"/>
        <dbReference type="ChEBI" id="CHEBI:57634"/>
        <dbReference type="ChEBI" id="CHEBI:58225"/>
        <dbReference type="EC" id="5.3.1.9"/>
    </reaction>
</comment>
<comment type="pathway">
    <text evidence="1">Carbohydrate biosynthesis; gluconeogenesis.</text>
</comment>
<comment type="pathway">
    <text evidence="1">Carbohydrate degradation; glycolysis; D-glyceraldehyde 3-phosphate and glycerone phosphate from D-glucose: step 2/4.</text>
</comment>
<comment type="subcellular location">
    <subcellularLocation>
        <location evidence="1">Cytoplasm</location>
    </subcellularLocation>
</comment>
<comment type="similarity">
    <text evidence="1">Belongs to the GPI family.</text>
</comment>
<sequence>MIKVDLQHSGLSIADLNEAKVKKVHEMIINKSGKGNDFLGWIEWPKTFDKKEYEEMKKVASSLRNKIDVLVTVGIGGSYLGIRAADEMIRGINHSDKVQVIYAGHTMSSTYVAQLSEYLKGKKFGICVISKSGTTTEPGIAFRALEKQLIEQVGVEASKELIVAVTDSSKGALKTLADNKGYPTFVIPDDIGGRFSVLTPVGIFPLLVAGVNTDNIFAGAIKAMDELVQGDLTNEAYKYAAARNALYNAGYKAEALVAYELQMQYTAEWWKQLFGESEGKDNKGLYPTSMIFSTDLHSLGQWVQEGARNVLFETVIKVKEPVANMLVEADTDNYDGLNYLSGKSFHEINSTAIEGVIDAHVNTGKMPNIVLEFDKMNDVQFGYLVYFFEIAVAMSGYLLEVNPFDQPGVEVYKYNMFKLLGKPGVK</sequence>
<reference key="1">
    <citation type="submission" date="2004-06" db="EMBL/GenBank/DDBJ databases">
        <authorList>
            <person name="Birren B.W."/>
            <person name="Stange-Thomann N."/>
            <person name="Hafez N."/>
            <person name="DeCaprio D."/>
            <person name="Fisher S."/>
            <person name="Butler J."/>
            <person name="Elkins T."/>
            <person name="Kodira C.D."/>
            <person name="Major J."/>
            <person name="Wang S."/>
            <person name="Nicol R."/>
            <person name="Nusbaum C."/>
        </authorList>
    </citation>
    <scope>NUCLEOTIDE SEQUENCE [LARGE SCALE GENOMIC DNA]</scope>
    <source>
        <strain>ATCC 33453 / NBRC 100688 / NCTC 11704 / L1</strain>
    </source>
</reference>
<feature type="chain" id="PRO_0000180671" description="Glucose-6-phosphate isomerase">
    <location>
        <begin position="1"/>
        <end position="426"/>
    </location>
</feature>
<feature type="active site" description="Proton donor" evidence="1">
    <location>
        <position position="276"/>
    </location>
</feature>
<feature type="active site" evidence="1">
    <location>
        <position position="297"/>
    </location>
</feature>
<feature type="active site" evidence="1">
    <location>
        <position position="413"/>
    </location>
</feature>
<organism>
    <name type="scientific">Mesoplasma florum (strain ATCC 33453 / NBRC 100688 / NCTC 11704 / L1)</name>
    <name type="common">Acholeplasma florum</name>
    <dbReference type="NCBI Taxonomy" id="265311"/>
    <lineage>
        <taxon>Bacteria</taxon>
        <taxon>Bacillati</taxon>
        <taxon>Mycoplasmatota</taxon>
        <taxon>Mollicutes</taxon>
        <taxon>Entomoplasmatales</taxon>
        <taxon>Entomoplasmataceae</taxon>
        <taxon>Mesoplasma</taxon>
    </lineage>
</organism>
<evidence type="ECO:0000255" key="1">
    <source>
        <dbReference type="HAMAP-Rule" id="MF_00473"/>
    </source>
</evidence>
<keyword id="KW-0963">Cytoplasm</keyword>
<keyword id="KW-0312">Gluconeogenesis</keyword>
<keyword id="KW-0324">Glycolysis</keyword>
<keyword id="KW-0413">Isomerase</keyword>
<keyword id="KW-1185">Reference proteome</keyword>
<dbReference type="EC" id="5.3.1.9" evidence="1"/>
<dbReference type="EMBL" id="AE017263">
    <property type="protein sequence ID" value="AAT75611.1"/>
    <property type="molecule type" value="Genomic_DNA"/>
</dbReference>
<dbReference type="RefSeq" id="WP_011183151.1">
    <property type="nucleotide sequence ID" value="NC_006055.1"/>
</dbReference>
<dbReference type="RefSeq" id="YP_053495.1">
    <property type="nucleotide sequence ID" value="NC_006055.1"/>
</dbReference>
<dbReference type="SMR" id="Q6F1L2"/>
<dbReference type="STRING" id="265311.Mfl254"/>
<dbReference type="PaxDb" id="265311-Mfl254"/>
<dbReference type="EnsemblBacteria" id="AAT75611">
    <property type="protein sequence ID" value="AAT75611"/>
    <property type="gene ID" value="Mfl254"/>
</dbReference>
<dbReference type="GeneID" id="2897789"/>
<dbReference type="KEGG" id="mfl:Mfl254"/>
<dbReference type="PATRIC" id="fig|265311.5.peg.254"/>
<dbReference type="eggNOG" id="COG0166">
    <property type="taxonomic scope" value="Bacteria"/>
</dbReference>
<dbReference type="HOGENOM" id="CLU_037303_0_1_14"/>
<dbReference type="OrthoDB" id="140919at2"/>
<dbReference type="UniPathway" id="UPA00109">
    <property type="reaction ID" value="UER00181"/>
</dbReference>
<dbReference type="UniPathway" id="UPA00138"/>
<dbReference type="Proteomes" id="UP000006647">
    <property type="component" value="Chromosome"/>
</dbReference>
<dbReference type="GO" id="GO:0005829">
    <property type="term" value="C:cytosol"/>
    <property type="evidence" value="ECO:0007669"/>
    <property type="project" value="TreeGrafter"/>
</dbReference>
<dbReference type="GO" id="GO:0097367">
    <property type="term" value="F:carbohydrate derivative binding"/>
    <property type="evidence" value="ECO:0007669"/>
    <property type="project" value="InterPro"/>
</dbReference>
<dbReference type="GO" id="GO:0004347">
    <property type="term" value="F:glucose-6-phosphate isomerase activity"/>
    <property type="evidence" value="ECO:0007669"/>
    <property type="project" value="UniProtKB-UniRule"/>
</dbReference>
<dbReference type="GO" id="GO:0048029">
    <property type="term" value="F:monosaccharide binding"/>
    <property type="evidence" value="ECO:0007669"/>
    <property type="project" value="TreeGrafter"/>
</dbReference>
<dbReference type="GO" id="GO:0006094">
    <property type="term" value="P:gluconeogenesis"/>
    <property type="evidence" value="ECO:0007669"/>
    <property type="project" value="UniProtKB-UniRule"/>
</dbReference>
<dbReference type="GO" id="GO:0051156">
    <property type="term" value="P:glucose 6-phosphate metabolic process"/>
    <property type="evidence" value="ECO:0007669"/>
    <property type="project" value="TreeGrafter"/>
</dbReference>
<dbReference type="GO" id="GO:0006096">
    <property type="term" value="P:glycolytic process"/>
    <property type="evidence" value="ECO:0007669"/>
    <property type="project" value="UniProtKB-UniRule"/>
</dbReference>
<dbReference type="CDD" id="cd05015">
    <property type="entry name" value="SIS_PGI_1"/>
    <property type="match status" value="1"/>
</dbReference>
<dbReference type="CDD" id="cd05016">
    <property type="entry name" value="SIS_PGI_2"/>
    <property type="match status" value="1"/>
</dbReference>
<dbReference type="FunFam" id="3.40.50.10490:FF:000015">
    <property type="entry name" value="Glucose-6-phosphate isomerase"/>
    <property type="match status" value="1"/>
</dbReference>
<dbReference type="FunFam" id="3.40.50.10490:FF:000016">
    <property type="entry name" value="Glucose-6-phosphate isomerase"/>
    <property type="match status" value="1"/>
</dbReference>
<dbReference type="Gene3D" id="3.40.50.10490">
    <property type="entry name" value="Glucose-6-phosphate isomerase like protein, domain 1"/>
    <property type="match status" value="2"/>
</dbReference>
<dbReference type="HAMAP" id="MF_00473">
    <property type="entry name" value="G6P_isomerase"/>
    <property type="match status" value="1"/>
</dbReference>
<dbReference type="InterPro" id="IPR001672">
    <property type="entry name" value="G6P_Isomerase"/>
</dbReference>
<dbReference type="InterPro" id="IPR018189">
    <property type="entry name" value="Phosphoglucose_isomerase_CS"/>
</dbReference>
<dbReference type="InterPro" id="IPR046348">
    <property type="entry name" value="SIS_dom_sf"/>
</dbReference>
<dbReference type="InterPro" id="IPR035476">
    <property type="entry name" value="SIS_PGI_1"/>
</dbReference>
<dbReference type="InterPro" id="IPR035482">
    <property type="entry name" value="SIS_PGI_2"/>
</dbReference>
<dbReference type="NCBIfam" id="NF010697">
    <property type="entry name" value="PRK14097.1"/>
    <property type="match status" value="1"/>
</dbReference>
<dbReference type="PANTHER" id="PTHR11469">
    <property type="entry name" value="GLUCOSE-6-PHOSPHATE ISOMERASE"/>
    <property type="match status" value="1"/>
</dbReference>
<dbReference type="PANTHER" id="PTHR11469:SF1">
    <property type="entry name" value="GLUCOSE-6-PHOSPHATE ISOMERASE"/>
    <property type="match status" value="1"/>
</dbReference>
<dbReference type="Pfam" id="PF00342">
    <property type="entry name" value="PGI"/>
    <property type="match status" value="1"/>
</dbReference>
<dbReference type="PRINTS" id="PR00662">
    <property type="entry name" value="G6PISOMERASE"/>
</dbReference>
<dbReference type="SUPFAM" id="SSF53697">
    <property type="entry name" value="SIS domain"/>
    <property type="match status" value="1"/>
</dbReference>
<dbReference type="PROSITE" id="PS00765">
    <property type="entry name" value="P_GLUCOSE_ISOMERASE_1"/>
    <property type="match status" value="1"/>
</dbReference>
<dbReference type="PROSITE" id="PS00174">
    <property type="entry name" value="P_GLUCOSE_ISOMERASE_2"/>
    <property type="match status" value="1"/>
</dbReference>
<dbReference type="PROSITE" id="PS51463">
    <property type="entry name" value="P_GLUCOSE_ISOMERASE_3"/>
    <property type="match status" value="1"/>
</dbReference>